<name>VP6_BTV1S</name>
<comment type="function">
    <text evidence="1">ATP dependent RNA helicase essential for RNA packaging and viral transcription. Possesses ss- and dsRNA-binding capacity.</text>
</comment>
<comment type="catalytic activity">
    <reaction evidence="1">
        <text>ATP + H2O = ADP + phosphate + H(+)</text>
        <dbReference type="Rhea" id="RHEA:13065"/>
        <dbReference type="ChEBI" id="CHEBI:15377"/>
        <dbReference type="ChEBI" id="CHEBI:15378"/>
        <dbReference type="ChEBI" id="CHEBI:30616"/>
        <dbReference type="ChEBI" id="CHEBI:43474"/>
        <dbReference type="ChEBI" id="CHEBI:456216"/>
        <dbReference type="EC" id="3.6.4.13"/>
    </reaction>
</comment>
<comment type="subunit">
    <text evidence="1">Homohexamer.</text>
</comment>
<comment type="subcellular location">
    <subcellularLocation>
        <location>Virion</location>
    </subcellularLocation>
    <text>Inner capsid.</text>
</comment>
<comment type="alternative products">
    <event type="alternative initiation"/>
    <isoform>
        <id>Q03328-1</id>
        <name>VP6</name>
        <sequence type="displayed"/>
    </isoform>
    <isoform>
        <id>Q03328-2</id>
        <name>VP6A</name>
        <sequence type="described" ref="VSP_018958"/>
    </isoform>
</comment>
<comment type="similarity">
    <text evidence="3">Belongs to the orbivirus VP6 family.</text>
</comment>
<comment type="sequence caution" evidence="3">
    <conflict type="erroneous initiation">
        <sequence resource="EMBL-CDS" id="BAA01714"/>
    </conflict>
</comment>
<evidence type="ECO:0000250" key="1">
    <source>
        <dbReference type="UniProtKB" id="Q98829"/>
    </source>
</evidence>
<evidence type="ECO:0000256" key="2">
    <source>
        <dbReference type="SAM" id="MobiDB-lite"/>
    </source>
</evidence>
<evidence type="ECO:0000305" key="3"/>
<organism>
    <name type="scientific">Bluetongue virus 1 (isolate South Africa)</name>
    <name type="common">BTV 1</name>
    <dbReference type="NCBI Taxonomy" id="10905"/>
    <lineage>
        <taxon>Viruses</taxon>
        <taxon>Riboviria</taxon>
        <taxon>Orthornavirae</taxon>
        <taxon>Duplornaviricota</taxon>
        <taxon>Resentoviricetes</taxon>
        <taxon>Reovirales</taxon>
        <taxon>Sedoreoviridae</taxon>
        <taxon>Orbivirus</taxon>
        <taxon>Bluetongue virus</taxon>
    </lineage>
</organism>
<protein>
    <recommendedName>
        <fullName>Helicase VP6-A</fullName>
        <ecNumber evidence="1">3.6.4.13</ecNumber>
    </recommendedName>
    <alternativeName>
        <fullName>Minor inner core protein VP6</fullName>
    </alternativeName>
</protein>
<keyword id="KW-0024">Alternative initiation</keyword>
<keyword id="KW-0067">ATP-binding</keyword>
<keyword id="KW-0167">Capsid protein</keyword>
<keyword id="KW-0378">Hydrolase</keyword>
<keyword id="KW-1153">Inner capsid protein</keyword>
<keyword id="KW-0547">Nucleotide-binding</keyword>
<keyword id="KW-0946">Virion</keyword>
<accession>Q03328</accession>
<accession>Q65752</accession>
<feature type="chain" id="PRO_0000040620" description="Helicase VP6-A">
    <location>
        <begin position="1"/>
        <end position="328"/>
    </location>
</feature>
<feature type="region of interest" description="Disordered" evidence="2">
    <location>
        <begin position="31"/>
        <end position="128"/>
    </location>
</feature>
<feature type="region of interest" description="Disordered" evidence="2">
    <location>
        <begin position="180"/>
        <end position="237"/>
    </location>
</feature>
<feature type="compositionally biased region" description="Basic and acidic residues" evidence="2">
    <location>
        <begin position="36"/>
        <end position="61"/>
    </location>
</feature>
<feature type="compositionally biased region" description="Basic and acidic residues" evidence="2">
    <location>
        <begin position="71"/>
        <end position="83"/>
    </location>
</feature>
<feature type="compositionally biased region" description="Basic and acidic residues" evidence="2">
    <location>
        <begin position="96"/>
        <end position="109"/>
    </location>
</feature>
<feature type="compositionally biased region" description="Gly residues" evidence="2">
    <location>
        <begin position="110"/>
        <end position="128"/>
    </location>
</feature>
<feature type="compositionally biased region" description="Basic and acidic residues" evidence="2">
    <location>
        <begin position="180"/>
        <end position="205"/>
    </location>
</feature>
<feature type="compositionally biased region" description="Basic and acidic residues" evidence="2">
    <location>
        <begin position="214"/>
        <end position="230"/>
    </location>
</feature>
<feature type="binding site" evidence="1">
    <location>
        <position position="110"/>
    </location>
    <ligand>
        <name>ATP</name>
        <dbReference type="ChEBI" id="CHEBI:30616"/>
    </ligand>
</feature>
<feature type="splice variant" id="VSP_018958" description="In isoform VP6A." evidence="3">
    <location>
        <begin position="1"/>
        <end position="4"/>
    </location>
</feature>
<gene>
    <name type="primary">Segment-9</name>
</gene>
<dbReference type="EC" id="3.6.4.13" evidence="1"/>
<dbReference type="EMBL" id="D10905">
    <property type="protein sequence ID" value="BAA01713.1"/>
    <property type="molecule type" value="Genomic_RNA"/>
</dbReference>
<dbReference type="EMBL" id="D10905">
    <property type="protein sequence ID" value="BAA01714.1"/>
    <property type="status" value="ALT_INIT"/>
    <property type="molecule type" value="Genomic_RNA"/>
</dbReference>
<dbReference type="PIR" id="JQ1875">
    <property type="entry name" value="JQ1875"/>
</dbReference>
<dbReference type="SMR" id="Q03328"/>
<dbReference type="GO" id="GO:0039625">
    <property type="term" value="C:viral inner capsid"/>
    <property type="evidence" value="ECO:0007669"/>
    <property type="project" value="UniProtKB-KW"/>
</dbReference>
<dbReference type="GO" id="GO:0005524">
    <property type="term" value="F:ATP binding"/>
    <property type="evidence" value="ECO:0007669"/>
    <property type="project" value="UniProtKB-KW"/>
</dbReference>
<dbReference type="GO" id="GO:0016787">
    <property type="term" value="F:hydrolase activity"/>
    <property type="evidence" value="ECO:0007669"/>
    <property type="project" value="UniProtKB-KW"/>
</dbReference>
<dbReference type="GO" id="GO:0005198">
    <property type="term" value="F:structural molecule activity"/>
    <property type="evidence" value="ECO:0007669"/>
    <property type="project" value="InterPro"/>
</dbReference>
<dbReference type="InterPro" id="IPR001399">
    <property type="entry name" value="Orbi_VP6"/>
</dbReference>
<dbReference type="Pfam" id="PF01516">
    <property type="entry name" value="Orbi_VP6"/>
    <property type="match status" value="1"/>
</dbReference>
<dbReference type="PRINTS" id="PR00902">
    <property type="entry name" value="VP6CAPSID"/>
</dbReference>
<proteinExistence type="inferred from homology"/>
<organismHost>
    <name type="scientific">Antilocapra americana</name>
    <name type="common">Pronghorn</name>
    <dbReference type="NCBI Taxonomy" id="9891"/>
</organismHost>
<organismHost>
    <name type="scientific">Bos taurus</name>
    <name type="common">Bovine</name>
    <dbReference type="NCBI Taxonomy" id="9913"/>
</organismHost>
<organismHost>
    <name type="scientific">Capra hircus</name>
    <name type="common">Goat</name>
    <dbReference type="NCBI Taxonomy" id="9925"/>
</organismHost>
<organismHost>
    <name type="scientific">Culicoides variipennis</name>
    <name type="common">Biting midge</name>
    <dbReference type="NCBI Taxonomy" id="46212"/>
</organismHost>
<organismHost>
    <name type="scientific">Ovis aries</name>
    <name type="common">Sheep</name>
    <dbReference type="NCBI Taxonomy" id="9940"/>
</organismHost>
<sequence>MSAAMLLAPGDVIKRSSEELKQRQIQINLTDWTEGETNKESKAERKEGDKAEELKDGEGRNRRAARRKRAAKETKDARCDRRIHTAVGSGSSAKGPGERANENVDRGDGKVGGGGGDADAGVGTTGANGGRWVVLTEEIRRAIESKYGTKIDVYRDEVPAQIIEVERSLQKELGISREGVAEQTERLRDLRRKEKSGAHAKAAERGRRKQGKKPHGDAQREGPEEEKTSEEPASVGITIEGVMSQKKLLSMIGGVERKMAPIGARESAVMLVSNSIKDVVRATAYFTAPTGDPHWKEVAAKLQKRRTIRYTSTGGDVKTEFLHLIDHL</sequence>
<reference key="1">
    <citation type="journal article" date="1992" name="J. Gen. Virol.">
        <title>Sequence of genome segment 9 of bluetongue virus (serotype 1, South Africa) and expression analysis demonstrating that different forms of VP6 are derived from initiation of protein synthesis at two distinct sites.</title>
        <authorList>
            <person name="Wade-Evans A.M."/>
            <person name="Mertens P.P.C."/>
            <person name="Belsham G.J."/>
        </authorList>
    </citation>
    <scope>NUCLEOTIDE SEQUENCE [GENOMIC RNA]</scope>
</reference>